<gene>
    <name evidence="1" type="primary">rsxC</name>
    <name type="ordered locus">SeAg_B1717</name>
</gene>
<sequence>MLKLFSAFRKDKIWDFDGGIHPPEMKTQSNGTPLRQVPLAPRFVIPLKQHIGAEGELCVSVGDRVLRGQALTRGRGRMLPVHAPTSGTVIAIAPHSTAHPSALAELSVIIDADGEDRWIEREGWSDYRAHSREALIERIHQYGVAGLGGAGFPTGVKLQGGGDKITTLIINAAECEPYITADDRLMQDCAAQIVEGIRILAHILQPREVLIGIEDNKPQAISMLRAVLADAHDISLRVIPTKYPSGGAKQLTQILTGKQVPHGGRSSDIGVLMQNVGTAYAVKRAVVDGEPITERVVTLTGEAVSRPGNVWARLGTPVRHLLNDAGFCPSADQMVIMGGPLMGFTLPWLDVPVVKITNCLLAPSVTEMGAPQEEKSCIRCSACADACPADLLPQQLYWFSKGQQHDKATAHHIADCIECGACAWVCPSNIPLVQYFRQEKAEINAIRLEEKRAAEAKARFEARQARLEREKAARLARHKSAAVQPAAKDQDAIAAALARVKEKQAQATQPVVIQAGSLPDNSAVIAAREARKAQARAKQAAHPVADSAISGGDPRKAAVEAAIARAKARKQEQQAGSEPAEPVDPRKAAVEAAIARAKARKQEQQAGSEPAEAVDPRKAAVEAAIARAKARKQEQQAGGEPAEAVDPRKAAVEAAIARAKARKQEQQTGSEPAEPVDPRKAAVEAAIARAKARKQEQQTGSEPAEPADPRKAAVAAAIARVQAKKAAQQQVVNED</sequence>
<evidence type="ECO:0000255" key="1">
    <source>
        <dbReference type="HAMAP-Rule" id="MF_00461"/>
    </source>
</evidence>
<evidence type="ECO:0000256" key="2">
    <source>
        <dbReference type="SAM" id="MobiDB-lite"/>
    </source>
</evidence>
<proteinExistence type="inferred from homology"/>
<feature type="chain" id="PRO_1000194520" description="Ion-translocating oxidoreductase complex subunit C">
    <location>
        <begin position="1"/>
        <end position="735"/>
    </location>
</feature>
<feature type="domain" description="4Fe-4S ferredoxin-type 1" evidence="1">
    <location>
        <begin position="368"/>
        <end position="397"/>
    </location>
</feature>
<feature type="domain" description="4Fe-4S ferredoxin-type 2" evidence="1">
    <location>
        <begin position="407"/>
        <end position="436"/>
    </location>
</feature>
<feature type="region of interest" description="Disordered" evidence="2">
    <location>
        <begin position="534"/>
        <end position="716"/>
    </location>
</feature>
<feature type="binding site" evidence="1">
    <location>
        <position position="377"/>
    </location>
    <ligand>
        <name>[4Fe-4S] cluster</name>
        <dbReference type="ChEBI" id="CHEBI:49883"/>
        <label>1</label>
    </ligand>
</feature>
<feature type="binding site" evidence="1">
    <location>
        <position position="380"/>
    </location>
    <ligand>
        <name>[4Fe-4S] cluster</name>
        <dbReference type="ChEBI" id="CHEBI:49883"/>
        <label>1</label>
    </ligand>
</feature>
<feature type="binding site" evidence="1">
    <location>
        <position position="383"/>
    </location>
    <ligand>
        <name>[4Fe-4S] cluster</name>
        <dbReference type="ChEBI" id="CHEBI:49883"/>
        <label>1</label>
    </ligand>
</feature>
<feature type="binding site" evidence="1">
    <location>
        <position position="387"/>
    </location>
    <ligand>
        <name>[4Fe-4S] cluster</name>
        <dbReference type="ChEBI" id="CHEBI:49883"/>
        <label>2</label>
    </ligand>
</feature>
<feature type="binding site" evidence="1">
    <location>
        <position position="416"/>
    </location>
    <ligand>
        <name>[4Fe-4S] cluster</name>
        <dbReference type="ChEBI" id="CHEBI:49883"/>
        <label>2</label>
    </ligand>
</feature>
<feature type="binding site" evidence="1">
    <location>
        <position position="419"/>
    </location>
    <ligand>
        <name>[4Fe-4S] cluster</name>
        <dbReference type="ChEBI" id="CHEBI:49883"/>
        <label>2</label>
    </ligand>
</feature>
<feature type="binding site" evidence="1">
    <location>
        <position position="422"/>
    </location>
    <ligand>
        <name>[4Fe-4S] cluster</name>
        <dbReference type="ChEBI" id="CHEBI:49883"/>
        <label>2</label>
    </ligand>
</feature>
<feature type="binding site" evidence="1">
    <location>
        <position position="426"/>
    </location>
    <ligand>
        <name>[4Fe-4S] cluster</name>
        <dbReference type="ChEBI" id="CHEBI:49883"/>
        <label>1</label>
    </ligand>
</feature>
<accession>B5F6J0</accession>
<comment type="function">
    <text evidence="1">Part of a membrane-bound complex that couples electron transfer with translocation of ions across the membrane. Required to maintain the reduced state of SoxR.</text>
</comment>
<comment type="cofactor">
    <cofactor evidence="1">
        <name>[4Fe-4S] cluster</name>
        <dbReference type="ChEBI" id="CHEBI:49883"/>
    </cofactor>
    <text evidence="1">Binds 2 [4Fe-4S] clusters per subunit.</text>
</comment>
<comment type="subunit">
    <text evidence="1">The complex is composed of six subunits: RsxA, RsxB, RsxC, RsxD, RsxE and RsxG.</text>
</comment>
<comment type="subcellular location">
    <subcellularLocation>
        <location evidence="1">Cell inner membrane</location>
        <topology evidence="1">Peripheral membrane protein</topology>
    </subcellularLocation>
</comment>
<comment type="similarity">
    <text evidence="1">Belongs to the 4Fe4S bacterial-type ferredoxin family. RnfC subfamily.</text>
</comment>
<organism>
    <name type="scientific">Salmonella agona (strain SL483)</name>
    <dbReference type="NCBI Taxonomy" id="454166"/>
    <lineage>
        <taxon>Bacteria</taxon>
        <taxon>Pseudomonadati</taxon>
        <taxon>Pseudomonadota</taxon>
        <taxon>Gammaproteobacteria</taxon>
        <taxon>Enterobacterales</taxon>
        <taxon>Enterobacteriaceae</taxon>
        <taxon>Salmonella</taxon>
    </lineage>
</organism>
<reference key="1">
    <citation type="journal article" date="2011" name="J. Bacteriol.">
        <title>Comparative genomics of 28 Salmonella enterica isolates: evidence for CRISPR-mediated adaptive sublineage evolution.</title>
        <authorList>
            <person name="Fricke W.F."/>
            <person name="Mammel M.K."/>
            <person name="McDermott P.F."/>
            <person name="Tartera C."/>
            <person name="White D.G."/>
            <person name="Leclerc J.E."/>
            <person name="Ravel J."/>
            <person name="Cebula T.A."/>
        </authorList>
    </citation>
    <scope>NUCLEOTIDE SEQUENCE [LARGE SCALE GENOMIC DNA]</scope>
    <source>
        <strain>SL483</strain>
    </source>
</reference>
<protein>
    <recommendedName>
        <fullName evidence="1">Ion-translocating oxidoreductase complex subunit C</fullName>
        <ecNumber evidence="1">7.-.-.-</ecNumber>
    </recommendedName>
    <alternativeName>
        <fullName evidence="1">Rsx electron transport complex subunit C</fullName>
    </alternativeName>
</protein>
<name>RSXC_SALA4</name>
<keyword id="KW-0004">4Fe-4S</keyword>
<keyword id="KW-0997">Cell inner membrane</keyword>
<keyword id="KW-1003">Cell membrane</keyword>
<keyword id="KW-0249">Electron transport</keyword>
<keyword id="KW-0408">Iron</keyword>
<keyword id="KW-0411">Iron-sulfur</keyword>
<keyword id="KW-0472">Membrane</keyword>
<keyword id="KW-0479">Metal-binding</keyword>
<keyword id="KW-0677">Repeat</keyword>
<keyword id="KW-1278">Translocase</keyword>
<keyword id="KW-0813">Transport</keyword>
<dbReference type="EC" id="7.-.-.-" evidence="1"/>
<dbReference type="EMBL" id="CP001138">
    <property type="protein sequence ID" value="ACH51322.1"/>
    <property type="molecule type" value="Genomic_DNA"/>
</dbReference>
<dbReference type="RefSeq" id="WP_000915659.1">
    <property type="nucleotide sequence ID" value="NC_011149.1"/>
</dbReference>
<dbReference type="SMR" id="B5F6J0"/>
<dbReference type="KEGG" id="sea:SeAg_B1717"/>
<dbReference type="HOGENOM" id="CLU_010808_2_1_6"/>
<dbReference type="Proteomes" id="UP000008819">
    <property type="component" value="Chromosome"/>
</dbReference>
<dbReference type="GO" id="GO:0005886">
    <property type="term" value="C:plasma membrane"/>
    <property type="evidence" value="ECO:0007669"/>
    <property type="project" value="UniProtKB-SubCell"/>
</dbReference>
<dbReference type="GO" id="GO:0051539">
    <property type="term" value="F:4 iron, 4 sulfur cluster binding"/>
    <property type="evidence" value="ECO:0007669"/>
    <property type="project" value="UniProtKB-KW"/>
</dbReference>
<dbReference type="GO" id="GO:0009055">
    <property type="term" value="F:electron transfer activity"/>
    <property type="evidence" value="ECO:0007669"/>
    <property type="project" value="InterPro"/>
</dbReference>
<dbReference type="GO" id="GO:0046872">
    <property type="term" value="F:metal ion binding"/>
    <property type="evidence" value="ECO:0007669"/>
    <property type="project" value="UniProtKB-KW"/>
</dbReference>
<dbReference type="GO" id="GO:0022900">
    <property type="term" value="P:electron transport chain"/>
    <property type="evidence" value="ECO:0007669"/>
    <property type="project" value="UniProtKB-UniRule"/>
</dbReference>
<dbReference type="Gene3D" id="3.30.70.20">
    <property type="match status" value="1"/>
</dbReference>
<dbReference type="Gene3D" id="3.40.50.11540">
    <property type="entry name" value="NADH-ubiquinone oxidoreductase 51kDa subunit"/>
    <property type="match status" value="1"/>
</dbReference>
<dbReference type="HAMAP" id="MF_00461">
    <property type="entry name" value="RsxC_RnfC"/>
    <property type="match status" value="1"/>
</dbReference>
<dbReference type="InterPro" id="IPR017896">
    <property type="entry name" value="4Fe4S_Fe-S-bd"/>
</dbReference>
<dbReference type="InterPro" id="IPR017900">
    <property type="entry name" value="4Fe4S_Fe_S_CS"/>
</dbReference>
<dbReference type="InterPro" id="IPR010208">
    <property type="entry name" value="Ion_transpt_RnfC/RsxC"/>
</dbReference>
<dbReference type="InterPro" id="IPR011538">
    <property type="entry name" value="Nuo51_FMN-bd"/>
</dbReference>
<dbReference type="InterPro" id="IPR037225">
    <property type="entry name" value="Nuo51_FMN-bd_sf"/>
</dbReference>
<dbReference type="InterPro" id="IPR026902">
    <property type="entry name" value="RnfC_N"/>
</dbReference>
<dbReference type="InterPro" id="IPR019554">
    <property type="entry name" value="Soluble_ligand-bd"/>
</dbReference>
<dbReference type="NCBIfam" id="NF003454">
    <property type="entry name" value="PRK05035.1"/>
    <property type="match status" value="1"/>
</dbReference>
<dbReference type="NCBIfam" id="TIGR01945">
    <property type="entry name" value="rnfC"/>
    <property type="match status" value="1"/>
</dbReference>
<dbReference type="PANTHER" id="PTHR43034">
    <property type="entry name" value="ION-TRANSLOCATING OXIDOREDUCTASE COMPLEX SUBUNIT C"/>
    <property type="match status" value="1"/>
</dbReference>
<dbReference type="PANTHER" id="PTHR43034:SF2">
    <property type="entry name" value="ION-TRANSLOCATING OXIDOREDUCTASE COMPLEX SUBUNIT C"/>
    <property type="match status" value="1"/>
</dbReference>
<dbReference type="Pfam" id="PF01512">
    <property type="entry name" value="Complex1_51K"/>
    <property type="match status" value="1"/>
</dbReference>
<dbReference type="Pfam" id="PF12838">
    <property type="entry name" value="Fer4_7"/>
    <property type="match status" value="1"/>
</dbReference>
<dbReference type="Pfam" id="PF13375">
    <property type="entry name" value="RnfC_N"/>
    <property type="match status" value="1"/>
</dbReference>
<dbReference type="Pfam" id="PF10531">
    <property type="entry name" value="SLBB"/>
    <property type="match status" value="1"/>
</dbReference>
<dbReference type="SUPFAM" id="SSF46548">
    <property type="entry name" value="alpha-helical ferredoxin"/>
    <property type="match status" value="1"/>
</dbReference>
<dbReference type="SUPFAM" id="SSF142019">
    <property type="entry name" value="Nqo1 FMN-binding domain-like"/>
    <property type="match status" value="1"/>
</dbReference>
<dbReference type="PROSITE" id="PS00198">
    <property type="entry name" value="4FE4S_FER_1"/>
    <property type="match status" value="2"/>
</dbReference>
<dbReference type="PROSITE" id="PS51379">
    <property type="entry name" value="4FE4S_FER_2"/>
    <property type="match status" value="2"/>
</dbReference>